<keyword id="KW-1003">Cell membrane</keyword>
<keyword id="KW-0868">Chloride</keyword>
<keyword id="KW-0869">Chloride channel</keyword>
<keyword id="KW-0407">Ion channel</keyword>
<keyword id="KW-0406">Ion transport</keyword>
<keyword id="KW-0472">Membrane</keyword>
<keyword id="KW-1185">Reference proteome</keyword>
<keyword id="KW-0812">Transmembrane</keyword>
<keyword id="KW-1133">Transmembrane helix</keyword>
<keyword id="KW-0813">Transport</keyword>
<gene>
    <name evidence="5" type="primary">best-17</name>
    <name evidence="5" type="ORF">T19C3.1</name>
</gene>
<feature type="chain" id="PRO_0000143132" description="Bestrophin homolog 17">
    <location>
        <begin position="1"/>
        <end position="481"/>
    </location>
</feature>
<feature type="topological domain" description="Cytoplasmic" evidence="4">
    <location>
        <begin position="1"/>
        <end position="27"/>
    </location>
</feature>
<feature type="transmembrane region" description="Helical" evidence="2">
    <location>
        <begin position="28"/>
        <end position="48"/>
    </location>
</feature>
<feature type="topological domain" description="Extracellular" evidence="4">
    <location>
        <begin position="49"/>
        <end position="95"/>
    </location>
</feature>
<feature type="transmembrane region" description="Helical" evidence="2">
    <location>
        <begin position="96"/>
        <end position="116"/>
    </location>
</feature>
<feature type="topological domain" description="Cytoplasmic" evidence="4">
    <location>
        <begin position="117"/>
        <end position="230"/>
    </location>
</feature>
<feature type="transmembrane region" description="Helical" evidence="2">
    <location>
        <begin position="231"/>
        <end position="251"/>
    </location>
</feature>
<feature type="topological domain" description="Extracellular" evidence="4">
    <location>
        <begin position="252"/>
        <end position="274"/>
    </location>
</feature>
<feature type="transmembrane region" description="Helical" evidence="2">
    <location>
        <begin position="275"/>
        <end position="295"/>
    </location>
</feature>
<feature type="topological domain" description="Cytoplasmic" evidence="4">
    <location>
        <begin position="296"/>
        <end position="481"/>
    </location>
</feature>
<feature type="region of interest" description="Disordered" evidence="3">
    <location>
        <begin position="427"/>
        <end position="481"/>
    </location>
</feature>
<feature type="compositionally biased region" description="Basic and acidic residues" evidence="3">
    <location>
        <begin position="445"/>
        <end position="461"/>
    </location>
</feature>
<feature type="compositionally biased region" description="Polar residues" evidence="3">
    <location>
        <begin position="462"/>
        <end position="474"/>
    </location>
</feature>
<sequence>MTVSYQLDVSSGNPLLFLRLLGRWRGSIWKSVVGDLFVWLLFYYAIYFAYRYAFSKQLQTVFEEISIHTDDRMKYLPLTFMLGFFVTTVFERWRSALNVMPFIESVALSVAVLLPGKGREDRLTRRAIIRYVVLHQILVFRDISMRVRRRFPTLKYVVDAGFMRQEELDVLESVNQESSQTYWVPINWANSLALVAHQQKLIDQPTAFNNVIFAIKEFRVAMETLIKFDAIPIPIAYPQVVFLAVRVYFAICLVSRQFLISDMKSKTQMDWPVPIMTVLEFIFVIGWMKVAEVLLNPLGEDDDDFEVNSIIDNNISRGMAIVDTTHGYHPDLVDDVFSDPNYLPAYSENSQIPRNLTGSAAKVELAAPTDEVKIVRVNPEDAPPTSERGSMFTRRNAYSLRNRKISIASNNLESPSQERKFNLSMPAGMLNKSTQPDRPTMETVSEEHEPSHFYRGDRVHSSDSGLSKTQQSSEESVDKKG</sequence>
<accession>Q22566</accession>
<proteinExistence type="inferred from homology"/>
<protein>
    <recommendedName>
        <fullName>Bestrophin homolog 17</fullName>
    </recommendedName>
</protein>
<name>BST17_CAEEL</name>
<evidence type="ECO:0000250" key="1"/>
<evidence type="ECO:0000255" key="2"/>
<evidence type="ECO:0000256" key="3">
    <source>
        <dbReference type="SAM" id="MobiDB-lite"/>
    </source>
</evidence>
<evidence type="ECO:0000305" key="4"/>
<evidence type="ECO:0000312" key="5">
    <source>
        <dbReference type="WormBase" id="T19C3.1"/>
    </source>
</evidence>
<dbReference type="EMBL" id="BX284603">
    <property type="protein sequence ID" value="CCD73733.2"/>
    <property type="molecule type" value="Genomic_DNA"/>
</dbReference>
<dbReference type="RefSeq" id="NP_001364808.1">
    <property type="nucleotide sequence ID" value="NM_001377915.1"/>
</dbReference>
<dbReference type="RefSeq" id="NP_497218.2">
    <property type="nucleotide sequence ID" value="NM_064817.2"/>
</dbReference>
<dbReference type="SMR" id="Q22566"/>
<dbReference type="BioGRID" id="53246">
    <property type="interactions" value="1"/>
</dbReference>
<dbReference type="FunCoup" id="Q22566">
    <property type="interactions" value="4"/>
</dbReference>
<dbReference type="STRING" id="6239.T19C3.1.1"/>
<dbReference type="PaxDb" id="6239-T19C3.1"/>
<dbReference type="PeptideAtlas" id="Q22566"/>
<dbReference type="EnsemblMetazoa" id="T19C3.1.1">
    <property type="protein sequence ID" value="T19C3.1.1"/>
    <property type="gene ID" value="WBGene00020559"/>
</dbReference>
<dbReference type="GeneID" id="188585"/>
<dbReference type="UCSC" id="T19C3.1">
    <property type="organism name" value="c. elegans"/>
</dbReference>
<dbReference type="AGR" id="WB:WBGene00020559"/>
<dbReference type="WormBase" id="T19C3.1">
    <property type="protein sequence ID" value="CE53916"/>
    <property type="gene ID" value="WBGene00020559"/>
    <property type="gene designation" value="best-17"/>
</dbReference>
<dbReference type="eggNOG" id="KOG3547">
    <property type="taxonomic scope" value="Eukaryota"/>
</dbReference>
<dbReference type="HOGENOM" id="CLU_018069_7_1_1"/>
<dbReference type="InParanoid" id="Q22566"/>
<dbReference type="OrthoDB" id="201595at2759"/>
<dbReference type="PhylomeDB" id="Q22566"/>
<dbReference type="PRO" id="PR:Q22566"/>
<dbReference type="Proteomes" id="UP000001940">
    <property type="component" value="Chromosome III"/>
</dbReference>
<dbReference type="Bgee" id="WBGene00020559">
    <property type="expression patterns" value="Expressed in material anatomical entity and 3 other cell types or tissues"/>
</dbReference>
<dbReference type="GO" id="GO:0034707">
    <property type="term" value="C:chloride channel complex"/>
    <property type="evidence" value="ECO:0007669"/>
    <property type="project" value="UniProtKB-KW"/>
</dbReference>
<dbReference type="GO" id="GO:0005886">
    <property type="term" value="C:plasma membrane"/>
    <property type="evidence" value="ECO:0007669"/>
    <property type="project" value="UniProtKB-SubCell"/>
</dbReference>
<dbReference type="GO" id="GO:0005254">
    <property type="term" value="F:chloride channel activity"/>
    <property type="evidence" value="ECO:0000318"/>
    <property type="project" value="GO_Central"/>
</dbReference>
<dbReference type="InterPro" id="IPR000615">
    <property type="entry name" value="Bestrophin"/>
</dbReference>
<dbReference type="InterPro" id="IPR021134">
    <property type="entry name" value="Bestrophin-like"/>
</dbReference>
<dbReference type="PANTHER" id="PTHR10736">
    <property type="entry name" value="BESTROPHIN"/>
    <property type="match status" value="1"/>
</dbReference>
<dbReference type="PANTHER" id="PTHR10736:SF59">
    <property type="entry name" value="BESTROPHIN HOMOLOG 17"/>
    <property type="match status" value="1"/>
</dbReference>
<dbReference type="Pfam" id="PF01062">
    <property type="entry name" value="Bestrophin"/>
    <property type="match status" value="1"/>
</dbReference>
<organism>
    <name type="scientific">Caenorhabditis elegans</name>
    <dbReference type="NCBI Taxonomy" id="6239"/>
    <lineage>
        <taxon>Eukaryota</taxon>
        <taxon>Metazoa</taxon>
        <taxon>Ecdysozoa</taxon>
        <taxon>Nematoda</taxon>
        <taxon>Chromadorea</taxon>
        <taxon>Rhabditida</taxon>
        <taxon>Rhabditina</taxon>
        <taxon>Rhabditomorpha</taxon>
        <taxon>Rhabditoidea</taxon>
        <taxon>Rhabditidae</taxon>
        <taxon>Peloderinae</taxon>
        <taxon>Caenorhabditis</taxon>
    </lineage>
</organism>
<comment type="function">
    <text evidence="1">Forms chloride channels.</text>
</comment>
<comment type="subunit">
    <text evidence="1">Forms oligomers.</text>
</comment>
<comment type="subcellular location">
    <subcellularLocation>
        <location evidence="1">Cell membrane</location>
        <topology evidence="1">Multi-pass membrane protein</topology>
    </subcellularLocation>
</comment>
<comment type="similarity">
    <text evidence="4">Belongs to the anion channel-forming bestrophin (TC 1.A.46) family. Calcium-sensitive chloride channel subfamily.</text>
</comment>
<reference key="1">
    <citation type="journal article" date="1998" name="Science">
        <title>Genome sequence of the nematode C. elegans: a platform for investigating biology.</title>
        <authorList>
            <consortium name="The C. elegans sequencing consortium"/>
        </authorList>
    </citation>
    <scope>NUCLEOTIDE SEQUENCE [LARGE SCALE GENOMIC DNA]</scope>
    <source>
        <strain>Bristol N2</strain>
    </source>
</reference>